<proteinExistence type="inferred from homology"/>
<dbReference type="EMBL" id="CP000393">
    <property type="protein sequence ID" value="ABG52487.1"/>
    <property type="molecule type" value="Genomic_DNA"/>
</dbReference>
<dbReference type="RefSeq" id="WP_011612832.1">
    <property type="nucleotide sequence ID" value="NC_008312.1"/>
</dbReference>
<dbReference type="SMR" id="Q10Z37"/>
<dbReference type="STRING" id="203124.Tery_3386"/>
<dbReference type="KEGG" id="ter:Tery_3386"/>
<dbReference type="eggNOG" id="COG0355">
    <property type="taxonomic scope" value="Bacteria"/>
</dbReference>
<dbReference type="HOGENOM" id="CLU_084338_1_2_3"/>
<dbReference type="OrthoDB" id="9804110at2"/>
<dbReference type="GO" id="GO:0031676">
    <property type="term" value="C:plasma membrane-derived thylakoid membrane"/>
    <property type="evidence" value="ECO:0007669"/>
    <property type="project" value="UniProtKB-SubCell"/>
</dbReference>
<dbReference type="GO" id="GO:0045259">
    <property type="term" value="C:proton-transporting ATP synthase complex"/>
    <property type="evidence" value="ECO:0007669"/>
    <property type="project" value="UniProtKB-KW"/>
</dbReference>
<dbReference type="GO" id="GO:0005524">
    <property type="term" value="F:ATP binding"/>
    <property type="evidence" value="ECO:0007669"/>
    <property type="project" value="UniProtKB-UniRule"/>
</dbReference>
<dbReference type="GO" id="GO:0046933">
    <property type="term" value="F:proton-transporting ATP synthase activity, rotational mechanism"/>
    <property type="evidence" value="ECO:0007669"/>
    <property type="project" value="UniProtKB-UniRule"/>
</dbReference>
<dbReference type="CDD" id="cd12152">
    <property type="entry name" value="F1-ATPase_delta"/>
    <property type="match status" value="1"/>
</dbReference>
<dbReference type="Gene3D" id="2.60.15.10">
    <property type="entry name" value="F0F1 ATP synthase delta/epsilon subunit, N-terminal"/>
    <property type="match status" value="1"/>
</dbReference>
<dbReference type="Gene3D" id="1.10.287.540">
    <property type="entry name" value="Helix hairpin bin"/>
    <property type="match status" value="1"/>
</dbReference>
<dbReference type="HAMAP" id="MF_00530">
    <property type="entry name" value="ATP_synth_epsil_bac"/>
    <property type="match status" value="1"/>
</dbReference>
<dbReference type="InterPro" id="IPR001469">
    <property type="entry name" value="ATP_synth_F1_dsu/esu"/>
</dbReference>
<dbReference type="InterPro" id="IPR020546">
    <property type="entry name" value="ATP_synth_F1_dsu/esu_N"/>
</dbReference>
<dbReference type="InterPro" id="IPR020547">
    <property type="entry name" value="ATP_synth_F1_esu_C"/>
</dbReference>
<dbReference type="InterPro" id="IPR036771">
    <property type="entry name" value="ATPsynth_dsu/esu_N"/>
</dbReference>
<dbReference type="NCBIfam" id="TIGR01216">
    <property type="entry name" value="ATP_synt_epsi"/>
    <property type="match status" value="1"/>
</dbReference>
<dbReference type="PANTHER" id="PTHR13822">
    <property type="entry name" value="ATP SYNTHASE DELTA/EPSILON CHAIN"/>
    <property type="match status" value="1"/>
</dbReference>
<dbReference type="PANTHER" id="PTHR13822:SF10">
    <property type="entry name" value="ATP SYNTHASE EPSILON CHAIN, CHLOROPLASTIC"/>
    <property type="match status" value="1"/>
</dbReference>
<dbReference type="Pfam" id="PF00401">
    <property type="entry name" value="ATP-synt_DE"/>
    <property type="match status" value="1"/>
</dbReference>
<dbReference type="Pfam" id="PF02823">
    <property type="entry name" value="ATP-synt_DE_N"/>
    <property type="match status" value="1"/>
</dbReference>
<dbReference type="SUPFAM" id="SSF51344">
    <property type="entry name" value="Epsilon subunit of F1F0-ATP synthase N-terminal domain"/>
    <property type="match status" value="1"/>
</dbReference>
<keyword id="KW-0066">ATP synthesis</keyword>
<keyword id="KW-0139">CF(1)</keyword>
<keyword id="KW-0375">Hydrogen ion transport</keyword>
<keyword id="KW-0406">Ion transport</keyword>
<keyword id="KW-0472">Membrane</keyword>
<keyword id="KW-0793">Thylakoid</keyword>
<keyword id="KW-0813">Transport</keyword>
<name>ATPE_TRIEI</name>
<evidence type="ECO:0000255" key="1">
    <source>
        <dbReference type="HAMAP-Rule" id="MF_00530"/>
    </source>
</evidence>
<comment type="function">
    <text evidence="1">Produces ATP from ADP in the presence of a proton gradient across the membrane.</text>
</comment>
<comment type="subunit">
    <text>F-type ATPases have 2 components, CF(1) - the catalytic core - and CF(0) - the membrane proton channel. CF(1) has five subunits: alpha(3), beta(3), gamma(1), delta(1), epsilon(1). CF(0) has three main subunits: a, b and c.</text>
</comment>
<comment type="subcellular location">
    <subcellularLocation>
        <location evidence="1">Cellular thylakoid membrane</location>
        <topology evidence="1">Peripheral membrane protein</topology>
    </subcellularLocation>
</comment>
<comment type="similarity">
    <text evidence="1">Belongs to the ATPase epsilon chain family.</text>
</comment>
<gene>
    <name evidence="1" type="primary">atpC</name>
    <name type="ordered locus">Tery_3386</name>
</gene>
<feature type="chain" id="PRO_0000265921" description="ATP synthase epsilon chain">
    <location>
        <begin position="1"/>
        <end position="137"/>
    </location>
</feature>
<protein>
    <recommendedName>
        <fullName evidence="1">ATP synthase epsilon chain</fullName>
    </recommendedName>
    <alternativeName>
        <fullName evidence="1">ATP synthase F1 sector epsilon subunit</fullName>
    </alternativeName>
    <alternativeName>
        <fullName evidence="1">F-ATPase epsilon subunit</fullName>
    </alternativeName>
</protein>
<accession>Q10Z37</accession>
<reference key="1">
    <citation type="journal article" date="2015" name="Proc. Natl. Acad. Sci. U.S.A.">
        <title>Trichodesmium genome maintains abundant, widespread noncoding DNA in situ, despite oligotrophic lifestyle.</title>
        <authorList>
            <person name="Walworth N."/>
            <person name="Pfreundt U."/>
            <person name="Nelson W.C."/>
            <person name="Mincer T."/>
            <person name="Heidelberg J.F."/>
            <person name="Fu F."/>
            <person name="Waterbury J.B."/>
            <person name="Glavina del Rio T."/>
            <person name="Goodwin L."/>
            <person name="Kyrpides N.C."/>
            <person name="Land M.L."/>
            <person name="Woyke T."/>
            <person name="Hutchins D.A."/>
            <person name="Hess W.R."/>
            <person name="Webb E.A."/>
        </authorList>
    </citation>
    <scope>NUCLEOTIDE SEQUENCE [LARGE SCALE GENOMIC DNA]</scope>
    <source>
        <strain>IMS101</strain>
    </source>
</reference>
<sequence>MTLTVRVIAPDKTIWDKEAQEVILPSTTGQLGILGGHAPLLTALDTGVMRVRAENDWIAIALMGGFAEIEADEVSILVNGAERGDNIDTEKARLAYEEAEKRLQTSESSDNLQEKIKAKQTLKRARARLQAAGGMVN</sequence>
<organism>
    <name type="scientific">Trichodesmium erythraeum (strain IMS101)</name>
    <dbReference type="NCBI Taxonomy" id="203124"/>
    <lineage>
        <taxon>Bacteria</taxon>
        <taxon>Bacillati</taxon>
        <taxon>Cyanobacteriota</taxon>
        <taxon>Cyanophyceae</taxon>
        <taxon>Oscillatoriophycideae</taxon>
        <taxon>Oscillatoriales</taxon>
        <taxon>Microcoleaceae</taxon>
        <taxon>Trichodesmium</taxon>
    </lineage>
</organism>